<proteinExistence type="evidence at protein level"/>
<keyword id="KW-0025">Alternative splicing</keyword>
<keyword id="KW-1017">Isopeptide bond</keyword>
<keyword id="KW-0539">Nucleus</keyword>
<keyword id="KW-0597">Phosphoprotein</keyword>
<keyword id="KW-1185">Reference proteome</keyword>
<keyword id="KW-0690">Ribosome biogenesis</keyword>
<keyword id="KW-0832">Ubl conjugation</keyword>
<gene>
    <name type="primary">Nol7</name>
    <name type="ORF">MNCb-1192</name>
</gene>
<organism>
    <name type="scientific">Mus musculus</name>
    <name type="common">Mouse</name>
    <dbReference type="NCBI Taxonomy" id="10090"/>
    <lineage>
        <taxon>Eukaryota</taxon>
        <taxon>Metazoa</taxon>
        <taxon>Chordata</taxon>
        <taxon>Craniata</taxon>
        <taxon>Vertebrata</taxon>
        <taxon>Euteleostomi</taxon>
        <taxon>Mammalia</taxon>
        <taxon>Eutheria</taxon>
        <taxon>Euarchontoglires</taxon>
        <taxon>Glires</taxon>
        <taxon>Rodentia</taxon>
        <taxon>Myomorpha</taxon>
        <taxon>Muroidea</taxon>
        <taxon>Muridae</taxon>
        <taxon>Murinae</taxon>
        <taxon>Mus</taxon>
        <taxon>Mus</taxon>
    </lineage>
</organism>
<dbReference type="EMBL" id="AB041566">
    <property type="protein sequence ID" value="BAA95050.1"/>
    <property type="status" value="ALT_FRAME"/>
    <property type="molecule type" value="mRNA"/>
</dbReference>
<dbReference type="EMBL" id="AK008670">
    <property type="protein sequence ID" value="BAB25823.1"/>
    <property type="molecule type" value="mRNA"/>
</dbReference>
<dbReference type="EMBL" id="AK019972">
    <property type="protein sequence ID" value="BAB31943.1"/>
    <property type="molecule type" value="mRNA"/>
</dbReference>
<dbReference type="EMBL" id="AK032963">
    <property type="protein sequence ID" value="BAC28101.1"/>
    <property type="molecule type" value="mRNA"/>
</dbReference>
<dbReference type="CCDS" id="CCDS36644.1">
    <molecule id="Q9D7Z3-1"/>
</dbReference>
<dbReference type="RefSeq" id="NP_076043.2">
    <molecule id="Q9D7Z3-1"/>
    <property type="nucleotide sequence ID" value="NM_023554.2"/>
</dbReference>
<dbReference type="SMR" id="Q9D7Z3"/>
<dbReference type="BioGRID" id="213851">
    <property type="interactions" value="5"/>
</dbReference>
<dbReference type="FunCoup" id="Q9D7Z3">
    <property type="interactions" value="2634"/>
</dbReference>
<dbReference type="STRING" id="10090.ENSMUSP00000071818"/>
<dbReference type="iPTMnet" id="Q9D7Z3"/>
<dbReference type="PhosphoSitePlus" id="Q9D7Z3"/>
<dbReference type="jPOST" id="Q9D7Z3"/>
<dbReference type="PaxDb" id="10090-ENSMUSP00000071818"/>
<dbReference type="PeptideAtlas" id="Q9D7Z3"/>
<dbReference type="ProteomicsDB" id="252984">
    <molecule id="Q9D7Z3-1"/>
</dbReference>
<dbReference type="ProteomicsDB" id="252985">
    <molecule id="Q9D7Z3-2"/>
</dbReference>
<dbReference type="Pumba" id="Q9D7Z3"/>
<dbReference type="Antibodypedia" id="24978">
    <property type="antibodies" value="31 antibodies from 15 providers"/>
</dbReference>
<dbReference type="DNASU" id="70078"/>
<dbReference type="Ensembl" id="ENSMUST00000071926.5">
    <molecule id="Q9D7Z3-1"/>
    <property type="protein sequence ID" value="ENSMUSP00000071818.4"/>
    <property type="gene ID" value="ENSMUSG00000063200.5"/>
</dbReference>
<dbReference type="Ensembl" id="ENSMUST00000222499.2">
    <molecule id="Q9D7Z3-2"/>
    <property type="protein sequence ID" value="ENSMUSP00000152581.2"/>
    <property type="gene ID" value="ENSMUSG00000063200.5"/>
</dbReference>
<dbReference type="GeneID" id="70078"/>
<dbReference type="KEGG" id="mmu:70078"/>
<dbReference type="UCSC" id="uc007qgb.1">
    <molecule id="Q9D7Z3-2"/>
    <property type="organism name" value="mouse"/>
</dbReference>
<dbReference type="UCSC" id="uc007qgc.1">
    <molecule id="Q9D7Z3-1"/>
    <property type="organism name" value="mouse"/>
</dbReference>
<dbReference type="AGR" id="MGI:1917328"/>
<dbReference type="CTD" id="51406"/>
<dbReference type="MGI" id="MGI:1917328">
    <property type="gene designation" value="Nol7"/>
</dbReference>
<dbReference type="VEuPathDB" id="HostDB:ENSMUSG00000063200"/>
<dbReference type="eggNOG" id="ENOG502S14X">
    <property type="taxonomic scope" value="Eukaryota"/>
</dbReference>
<dbReference type="GeneTree" id="ENSGT00390000004118"/>
<dbReference type="HOGENOM" id="CLU_095368_0_0_1"/>
<dbReference type="InParanoid" id="Q9D7Z3"/>
<dbReference type="OMA" id="WACKEKA"/>
<dbReference type="OrthoDB" id="9907143at2759"/>
<dbReference type="PhylomeDB" id="Q9D7Z3"/>
<dbReference type="TreeFam" id="TF336320"/>
<dbReference type="BioGRID-ORCS" id="70078">
    <property type="hits" value="21 hits in 76 CRISPR screens"/>
</dbReference>
<dbReference type="ChiTaRS" id="Nol7">
    <property type="organism name" value="mouse"/>
</dbReference>
<dbReference type="PRO" id="PR:Q9D7Z3"/>
<dbReference type="Proteomes" id="UP000000589">
    <property type="component" value="Chromosome 13"/>
</dbReference>
<dbReference type="RNAct" id="Q9D7Z3">
    <property type="molecule type" value="protein"/>
</dbReference>
<dbReference type="Bgee" id="ENSMUSG00000063200">
    <property type="expression patterns" value="Expressed in medial ganglionic eminence and 264 other cell types or tissues"/>
</dbReference>
<dbReference type="ExpressionAtlas" id="Q9D7Z3">
    <property type="expression patterns" value="baseline and differential"/>
</dbReference>
<dbReference type="GO" id="GO:0005694">
    <property type="term" value="C:chromosome"/>
    <property type="evidence" value="ECO:0007669"/>
    <property type="project" value="Ensembl"/>
</dbReference>
<dbReference type="GO" id="GO:0005739">
    <property type="term" value="C:mitochondrion"/>
    <property type="evidence" value="ECO:0007669"/>
    <property type="project" value="Ensembl"/>
</dbReference>
<dbReference type="GO" id="GO:0005730">
    <property type="term" value="C:nucleolus"/>
    <property type="evidence" value="ECO:0007669"/>
    <property type="project" value="UniProtKB-SubCell"/>
</dbReference>
<dbReference type="GO" id="GO:0032040">
    <property type="term" value="C:small-subunit processome"/>
    <property type="evidence" value="ECO:0000250"/>
    <property type="project" value="UniProtKB"/>
</dbReference>
<dbReference type="GO" id="GO:0030490">
    <property type="term" value="P:maturation of SSU-rRNA"/>
    <property type="evidence" value="ECO:0000250"/>
    <property type="project" value="UniProtKB"/>
</dbReference>
<dbReference type="GO" id="GO:0042274">
    <property type="term" value="P:ribosomal small subunit biogenesis"/>
    <property type="evidence" value="ECO:0000250"/>
    <property type="project" value="UniProtKB"/>
</dbReference>
<dbReference type="InterPro" id="IPR012579">
    <property type="entry name" value="NOL7_C"/>
</dbReference>
<dbReference type="PANTHER" id="PTHR32337">
    <property type="entry name" value="NUCLEOLAR PROTEIN 7"/>
    <property type="match status" value="1"/>
</dbReference>
<dbReference type="PANTHER" id="PTHR32337:SF2">
    <property type="entry name" value="NUCLEOLAR PROTEIN 7"/>
    <property type="match status" value="1"/>
</dbReference>
<dbReference type="Pfam" id="PF08157">
    <property type="entry name" value="NUC129"/>
    <property type="match status" value="1"/>
</dbReference>
<evidence type="ECO:0000250" key="1">
    <source>
        <dbReference type="UniProtKB" id="Q9UMY1"/>
    </source>
</evidence>
<evidence type="ECO:0000256" key="2">
    <source>
        <dbReference type="SAM" id="MobiDB-lite"/>
    </source>
</evidence>
<evidence type="ECO:0000303" key="3">
    <source>
    </source>
</evidence>
<evidence type="ECO:0000305" key="4"/>
<evidence type="ECO:0007744" key="5">
    <source>
    </source>
</evidence>
<evidence type="ECO:0007744" key="6">
    <source>
    </source>
</evidence>
<evidence type="ECO:0007744" key="7">
    <source>
    </source>
</evidence>
<accession>Q9D7Z3</accession>
<accession>Q9CY79</accession>
<accession>Q9JJE2</accession>
<feature type="chain" id="PRO_0000096938" description="U3 small nucleolar RNA-associated protein NOL7">
    <location>
        <begin position="1"/>
        <end position="254"/>
    </location>
</feature>
<feature type="region of interest" description="Disordered" evidence="2">
    <location>
        <begin position="1"/>
        <end position="90"/>
    </location>
</feature>
<feature type="region of interest" description="Disordered" evidence="2">
    <location>
        <begin position="235"/>
        <end position="254"/>
    </location>
</feature>
<feature type="compositionally biased region" description="Acidic residues" evidence="2">
    <location>
        <begin position="18"/>
        <end position="31"/>
    </location>
</feature>
<feature type="compositionally biased region" description="Acidic residues" evidence="2">
    <location>
        <begin position="48"/>
        <end position="61"/>
    </location>
</feature>
<feature type="compositionally biased region" description="Basic and acidic residues" evidence="2">
    <location>
        <begin position="71"/>
        <end position="90"/>
    </location>
</feature>
<feature type="modified residue" description="Phosphoserine" evidence="5 6 7">
    <location>
        <position position="129"/>
    </location>
</feature>
<feature type="cross-link" description="Glycyl lysine isopeptide (Lys-Gly) (interchain with G-Cter in SUMO2)" evidence="1">
    <location>
        <position position="127"/>
    </location>
</feature>
<feature type="cross-link" description="Glycyl lysine isopeptide (Lys-Gly) (interchain with G-Cter in SUMO2)" evidence="1">
    <location>
        <position position="157"/>
    </location>
</feature>
<feature type="splice variant" id="VSP_014793" description="In isoform 2." evidence="3">
    <original>AQKQQNAKRFKKRWMAKKMKKKTYK</original>
    <variation>KIARSSVGFSSFYK</variation>
    <location>
        <begin position="230"/>
        <end position="254"/>
    </location>
</feature>
<sequence>MVQLRPRLSRIPAPAEAMVDEDQAASEEEEAEHGLLLAQPSSGAAAEPLDEEEDADDEAPEELTFASAQAEAREEELRVRASARRDKTLLKEKRKRREELFIEQKKRKLLPDAVLEQLTTASEADIKKSPENVKVNLKKKSEQHAKGRNSKKVKVQKVQSVGQIESYMAVRLKDEDLRDSRQEAAKHFIHSCLYGSDSKRTTVNKFLSLNNKRSPVKKAAAQFLTSTWGAQKQQNAKRFKKRWMAKKMKKKTYK</sequence>
<comment type="function">
    <text evidence="1">Functions as part of the small subunit (SSU) processome, first precursor of the small eukaryotic ribosomal subunit that coordinates the first two steps of ribosome biogenesis in transcription of the primary transcript pre-RNA and pre-18S processing. During the assembly of the SSU processome in the nucleolus, many ribosome biogenesis factors, an RNA chaperone and ribosomal proteins associate with the nascent pre-rRNA and work in concert to generate RNA folding, modifications, rearrangements and cleavage as well as targeted degradation of pre-ribosomal RNA by the RNA exosome. This subunit is required for processing of the 5'-external transcribed spacer sequence (5'ETS) of the primary transcript pre-rRNA to yield the 18S rRNA. Also plays a role in maintaining early pre-rRNA levels, either by assisting in its transcription or stability.</text>
</comment>
<comment type="subunit">
    <text evidence="1">Part of the small subunit (SSU) processome, composed of more than 70 proteins and the RNA chaperone small nucleolar RNA (snoRNA) U3.</text>
</comment>
<comment type="subcellular location">
    <subcellularLocation>
        <location evidence="1">Nucleus</location>
        <location evidence="1">Nucleolus</location>
    </subcellularLocation>
</comment>
<comment type="alternative products">
    <event type="alternative splicing"/>
    <isoform>
        <id>Q9D7Z3-1</id>
        <name>1</name>
        <sequence type="displayed"/>
    </isoform>
    <isoform>
        <id>Q9D7Z3-2</id>
        <name>2</name>
        <sequence type="described" ref="VSP_014793"/>
    </isoform>
</comment>
<comment type="miscellaneous">
    <molecule>Isoform 2</molecule>
    <text evidence="4">May be due to intron retention.</text>
</comment>
<comment type="similarity">
    <text evidence="4">Belongs to the UTP16 family.</text>
</comment>
<comment type="sequence caution" evidence="4">
    <conflict type="frameshift">
        <sequence resource="EMBL-CDS" id="BAA95050"/>
    </conflict>
</comment>
<protein>
    <recommendedName>
        <fullName evidence="4">U3 small nucleolar RNA-associated protein NOL7</fullName>
        <shortName evidence="4">U3 snoRNA-associated protein NOL7</shortName>
    </recommendedName>
    <alternativeName>
        <fullName>Nucleolar protein 7</fullName>
    </alternativeName>
</protein>
<reference key="1">
    <citation type="submission" date="2000-04" db="EMBL/GenBank/DDBJ databases">
        <title>Isolation of full-length cDNA clones from mouse brain cDNA library made by oligo-capping method.</title>
        <authorList>
            <person name="Osada N."/>
            <person name="Kusuda J."/>
            <person name="Tanuma R."/>
            <person name="Ito A."/>
            <person name="Hirata M."/>
            <person name="Sugano S."/>
            <person name="Hashimoto K."/>
        </authorList>
    </citation>
    <scope>NUCLEOTIDE SEQUENCE [LARGE SCALE MRNA] (ISOFORM 1)</scope>
    <source>
        <strain>C57BL/6J</strain>
        <tissue>Brain</tissue>
    </source>
</reference>
<reference key="2">
    <citation type="journal article" date="2005" name="Science">
        <title>The transcriptional landscape of the mammalian genome.</title>
        <authorList>
            <person name="Carninci P."/>
            <person name="Kasukawa T."/>
            <person name="Katayama S."/>
            <person name="Gough J."/>
            <person name="Frith M.C."/>
            <person name="Maeda N."/>
            <person name="Oyama R."/>
            <person name="Ravasi T."/>
            <person name="Lenhard B."/>
            <person name="Wells C."/>
            <person name="Kodzius R."/>
            <person name="Shimokawa K."/>
            <person name="Bajic V.B."/>
            <person name="Brenner S.E."/>
            <person name="Batalov S."/>
            <person name="Forrest A.R."/>
            <person name="Zavolan M."/>
            <person name="Davis M.J."/>
            <person name="Wilming L.G."/>
            <person name="Aidinis V."/>
            <person name="Allen J.E."/>
            <person name="Ambesi-Impiombato A."/>
            <person name="Apweiler R."/>
            <person name="Aturaliya R.N."/>
            <person name="Bailey T.L."/>
            <person name="Bansal M."/>
            <person name="Baxter L."/>
            <person name="Beisel K.W."/>
            <person name="Bersano T."/>
            <person name="Bono H."/>
            <person name="Chalk A.M."/>
            <person name="Chiu K.P."/>
            <person name="Choudhary V."/>
            <person name="Christoffels A."/>
            <person name="Clutterbuck D.R."/>
            <person name="Crowe M.L."/>
            <person name="Dalla E."/>
            <person name="Dalrymple B.P."/>
            <person name="de Bono B."/>
            <person name="Della Gatta G."/>
            <person name="di Bernardo D."/>
            <person name="Down T."/>
            <person name="Engstrom P."/>
            <person name="Fagiolini M."/>
            <person name="Faulkner G."/>
            <person name="Fletcher C.F."/>
            <person name="Fukushima T."/>
            <person name="Furuno M."/>
            <person name="Futaki S."/>
            <person name="Gariboldi M."/>
            <person name="Georgii-Hemming P."/>
            <person name="Gingeras T.R."/>
            <person name="Gojobori T."/>
            <person name="Green R.E."/>
            <person name="Gustincich S."/>
            <person name="Harbers M."/>
            <person name="Hayashi Y."/>
            <person name="Hensch T.K."/>
            <person name="Hirokawa N."/>
            <person name="Hill D."/>
            <person name="Huminiecki L."/>
            <person name="Iacono M."/>
            <person name="Ikeo K."/>
            <person name="Iwama A."/>
            <person name="Ishikawa T."/>
            <person name="Jakt M."/>
            <person name="Kanapin A."/>
            <person name="Katoh M."/>
            <person name="Kawasawa Y."/>
            <person name="Kelso J."/>
            <person name="Kitamura H."/>
            <person name="Kitano H."/>
            <person name="Kollias G."/>
            <person name="Krishnan S.P."/>
            <person name="Kruger A."/>
            <person name="Kummerfeld S.K."/>
            <person name="Kurochkin I.V."/>
            <person name="Lareau L.F."/>
            <person name="Lazarevic D."/>
            <person name="Lipovich L."/>
            <person name="Liu J."/>
            <person name="Liuni S."/>
            <person name="McWilliam S."/>
            <person name="Madan Babu M."/>
            <person name="Madera M."/>
            <person name="Marchionni L."/>
            <person name="Matsuda H."/>
            <person name="Matsuzawa S."/>
            <person name="Miki H."/>
            <person name="Mignone F."/>
            <person name="Miyake S."/>
            <person name="Morris K."/>
            <person name="Mottagui-Tabar S."/>
            <person name="Mulder N."/>
            <person name="Nakano N."/>
            <person name="Nakauchi H."/>
            <person name="Ng P."/>
            <person name="Nilsson R."/>
            <person name="Nishiguchi S."/>
            <person name="Nishikawa S."/>
            <person name="Nori F."/>
            <person name="Ohara O."/>
            <person name="Okazaki Y."/>
            <person name="Orlando V."/>
            <person name="Pang K.C."/>
            <person name="Pavan W.J."/>
            <person name="Pavesi G."/>
            <person name="Pesole G."/>
            <person name="Petrovsky N."/>
            <person name="Piazza S."/>
            <person name="Reed J."/>
            <person name="Reid J.F."/>
            <person name="Ring B.Z."/>
            <person name="Ringwald M."/>
            <person name="Rost B."/>
            <person name="Ruan Y."/>
            <person name="Salzberg S.L."/>
            <person name="Sandelin A."/>
            <person name="Schneider C."/>
            <person name="Schoenbach C."/>
            <person name="Sekiguchi K."/>
            <person name="Semple C.A."/>
            <person name="Seno S."/>
            <person name="Sessa L."/>
            <person name="Sheng Y."/>
            <person name="Shibata Y."/>
            <person name="Shimada H."/>
            <person name="Shimada K."/>
            <person name="Silva D."/>
            <person name="Sinclair B."/>
            <person name="Sperling S."/>
            <person name="Stupka E."/>
            <person name="Sugiura K."/>
            <person name="Sultana R."/>
            <person name="Takenaka Y."/>
            <person name="Taki K."/>
            <person name="Tammoja K."/>
            <person name="Tan S.L."/>
            <person name="Tang S."/>
            <person name="Taylor M.S."/>
            <person name="Tegner J."/>
            <person name="Teichmann S.A."/>
            <person name="Ueda H.R."/>
            <person name="van Nimwegen E."/>
            <person name="Verardo R."/>
            <person name="Wei C.L."/>
            <person name="Yagi K."/>
            <person name="Yamanishi H."/>
            <person name="Zabarovsky E."/>
            <person name="Zhu S."/>
            <person name="Zimmer A."/>
            <person name="Hide W."/>
            <person name="Bult C."/>
            <person name="Grimmond S.M."/>
            <person name="Teasdale R.D."/>
            <person name="Liu E.T."/>
            <person name="Brusic V."/>
            <person name="Quackenbush J."/>
            <person name="Wahlestedt C."/>
            <person name="Mattick J.S."/>
            <person name="Hume D.A."/>
            <person name="Kai C."/>
            <person name="Sasaki D."/>
            <person name="Tomaru Y."/>
            <person name="Fukuda S."/>
            <person name="Kanamori-Katayama M."/>
            <person name="Suzuki M."/>
            <person name="Aoki J."/>
            <person name="Arakawa T."/>
            <person name="Iida J."/>
            <person name="Imamura K."/>
            <person name="Itoh M."/>
            <person name="Kato T."/>
            <person name="Kawaji H."/>
            <person name="Kawagashira N."/>
            <person name="Kawashima T."/>
            <person name="Kojima M."/>
            <person name="Kondo S."/>
            <person name="Konno H."/>
            <person name="Nakano K."/>
            <person name="Ninomiya N."/>
            <person name="Nishio T."/>
            <person name="Okada M."/>
            <person name="Plessy C."/>
            <person name="Shibata K."/>
            <person name="Shiraki T."/>
            <person name="Suzuki S."/>
            <person name="Tagami M."/>
            <person name="Waki K."/>
            <person name="Watahiki A."/>
            <person name="Okamura-Oho Y."/>
            <person name="Suzuki H."/>
            <person name="Kawai J."/>
            <person name="Hayashizaki Y."/>
        </authorList>
    </citation>
    <scope>NUCLEOTIDE SEQUENCE [LARGE SCALE MRNA] (ISOFORMS 1 AND 2)</scope>
    <source>
        <strain>C57BL/6J</strain>
        <tissue>Stomach</tissue>
        <tissue>Wolffian duct</tissue>
    </source>
</reference>
<reference key="3">
    <citation type="journal article" date="2007" name="Proc. Natl. Acad. Sci. U.S.A.">
        <title>Large-scale phosphorylation analysis of mouse liver.</title>
        <authorList>
            <person name="Villen J."/>
            <person name="Beausoleil S.A."/>
            <person name="Gerber S.A."/>
            <person name="Gygi S.P."/>
        </authorList>
    </citation>
    <scope>PHOSPHORYLATION [LARGE SCALE ANALYSIS] AT SER-129</scope>
    <scope>IDENTIFICATION BY MASS SPECTROMETRY [LARGE SCALE ANALYSIS]</scope>
    <source>
        <tissue>Liver</tissue>
    </source>
</reference>
<reference key="4">
    <citation type="journal article" date="2009" name="Mol. Cell. Proteomics">
        <title>Large scale localization of protein phosphorylation by use of electron capture dissociation mass spectrometry.</title>
        <authorList>
            <person name="Sweet S.M."/>
            <person name="Bailey C.M."/>
            <person name="Cunningham D.L."/>
            <person name="Heath J.K."/>
            <person name="Cooper H.J."/>
        </authorList>
    </citation>
    <scope>PHOSPHORYLATION [LARGE SCALE ANALYSIS] AT SER-129</scope>
    <scope>IDENTIFICATION BY MASS SPECTROMETRY [LARGE SCALE ANALYSIS]</scope>
    <source>
        <tissue>Embryonic fibroblast</tissue>
    </source>
</reference>
<reference key="5">
    <citation type="journal article" date="2010" name="Cell">
        <title>A tissue-specific atlas of mouse protein phosphorylation and expression.</title>
        <authorList>
            <person name="Huttlin E.L."/>
            <person name="Jedrychowski M.P."/>
            <person name="Elias J.E."/>
            <person name="Goswami T."/>
            <person name="Rad R."/>
            <person name="Beausoleil S.A."/>
            <person name="Villen J."/>
            <person name="Haas W."/>
            <person name="Sowa M.E."/>
            <person name="Gygi S.P."/>
        </authorList>
    </citation>
    <scope>PHOSPHORYLATION [LARGE SCALE ANALYSIS] AT SER-129</scope>
    <scope>IDENTIFICATION BY MASS SPECTROMETRY [LARGE SCALE ANALYSIS]</scope>
    <source>
        <tissue>Spleen</tissue>
    </source>
</reference>
<name>UTP16_MOUSE</name>